<gene>
    <name type="primary">Ids</name>
</gene>
<organism>
    <name type="scientific">Mus musculus</name>
    <name type="common">Mouse</name>
    <dbReference type="NCBI Taxonomy" id="10090"/>
    <lineage>
        <taxon>Eukaryota</taxon>
        <taxon>Metazoa</taxon>
        <taxon>Chordata</taxon>
        <taxon>Craniata</taxon>
        <taxon>Vertebrata</taxon>
        <taxon>Euteleostomi</taxon>
        <taxon>Mammalia</taxon>
        <taxon>Eutheria</taxon>
        <taxon>Euarchontoglires</taxon>
        <taxon>Glires</taxon>
        <taxon>Rodentia</taxon>
        <taxon>Myomorpha</taxon>
        <taxon>Muroidea</taxon>
        <taxon>Muridae</taxon>
        <taxon>Murinae</taxon>
        <taxon>Mus</taxon>
        <taxon>Mus</taxon>
    </lineage>
</organism>
<evidence type="ECO:0000250" key="1">
    <source>
        <dbReference type="UniProtKB" id="P15289"/>
    </source>
</evidence>
<evidence type="ECO:0000250" key="2">
    <source>
        <dbReference type="UniProtKB" id="P22304"/>
    </source>
</evidence>
<evidence type="ECO:0000255" key="3"/>
<evidence type="ECO:0000269" key="4">
    <source>
    </source>
</evidence>
<evidence type="ECO:0000305" key="5"/>
<keyword id="KW-0106">Calcium</keyword>
<keyword id="KW-1015">Disulfide bond</keyword>
<keyword id="KW-0325">Glycoprotein</keyword>
<keyword id="KW-0378">Hydrolase</keyword>
<keyword id="KW-0458">Lysosome</keyword>
<keyword id="KW-0479">Metal-binding</keyword>
<keyword id="KW-1185">Reference proteome</keyword>
<keyword id="KW-0732">Signal</keyword>
<keyword id="KW-0865">Zymogen</keyword>
<feature type="signal peptide" evidence="3">
    <location>
        <begin position="1"/>
        <end position="29"/>
    </location>
</feature>
<feature type="propeptide" id="PRO_0000033431" evidence="2">
    <location>
        <begin position="30"/>
        <end position="35"/>
    </location>
</feature>
<feature type="chain" id="PRO_0000033432" description="Iduronate 2-sulfatase">
    <location>
        <begin position="36"/>
        <end position="552"/>
    </location>
</feature>
<feature type="active site" description="Nucleophile" evidence="2">
    <location>
        <position position="86"/>
    </location>
</feature>
<feature type="active site" evidence="2">
    <location>
        <position position="140"/>
    </location>
</feature>
<feature type="binding site" evidence="2">
    <location>
        <position position="47"/>
    </location>
    <ligand>
        <name>Ca(2+)</name>
        <dbReference type="ChEBI" id="CHEBI:29108"/>
    </ligand>
</feature>
<feature type="binding site" evidence="2">
    <location>
        <position position="48"/>
    </location>
    <ligand>
        <name>Ca(2+)</name>
        <dbReference type="ChEBI" id="CHEBI:29108"/>
    </ligand>
</feature>
<feature type="binding site" description="via 3-oxoalanine" evidence="2">
    <location>
        <position position="86"/>
    </location>
    <ligand>
        <name>Ca(2+)</name>
        <dbReference type="ChEBI" id="CHEBI:29108"/>
    </ligand>
</feature>
<feature type="binding site" evidence="2">
    <location>
        <position position="336"/>
    </location>
    <ligand>
        <name>Ca(2+)</name>
        <dbReference type="ChEBI" id="CHEBI:29108"/>
    </ligand>
</feature>
<feature type="binding site" evidence="2">
    <location>
        <position position="337"/>
    </location>
    <ligand>
        <name>Ca(2+)</name>
        <dbReference type="ChEBI" id="CHEBI:29108"/>
    </ligand>
</feature>
<feature type="modified residue" description="3-oxoalanine (Cys)" evidence="2">
    <location>
        <position position="86"/>
    </location>
</feature>
<feature type="glycosylation site" description="N-linked (GlcNAc...) asparagine" evidence="3">
    <location>
        <position position="117"/>
    </location>
</feature>
<feature type="glycosylation site" description="N-linked (GlcNAc...) asparagine" evidence="3">
    <location>
        <position position="146"/>
    </location>
</feature>
<feature type="glycosylation site" description="N-linked (GlcNAc...) asparagine" evidence="3">
    <location>
        <position position="248"/>
    </location>
</feature>
<feature type="glycosylation site" description="N-linked (GlcNAc...) asparagine" evidence="3">
    <location>
        <position position="282"/>
    </location>
</feature>
<feature type="glycosylation site" description="N-linked (GlcNAc...) asparagine" evidence="3">
    <location>
        <position position="515"/>
    </location>
</feature>
<feature type="glycosylation site" description="N-linked (GlcNAc...) asparagine" evidence="3">
    <location>
        <position position="539"/>
    </location>
</feature>
<feature type="disulfide bond" evidence="2">
    <location>
        <begin position="173"/>
        <end position="186"/>
    </location>
</feature>
<feature type="disulfide bond" evidence="2">
    <location>
        <begin position="424"/>
        <end position="434"/>
    </location>
</feature>
<feature type="sequence conflict" description="In Ref. 1; BAE38612." evidence="5" ref="1">
    <original>I</original>
    <variation>V</variation>
    <location>
        <position position="41"/>
    </location>
</feature>
<feature type="sequence conflict" description="In Ref. 3; AAA37880." evidence="5" ref="3">
    <original>A</original>
    <variation>G</variation>
    <location>
        <position position="218"/>
    </location>
</feature>
<feature type="sequence conflict" description="In Ref. 3; AAA37880." evidence="5" ref="3">
    <original>S</original>
    <variation>T</variation>
    <location>
        <position position="483"/>
    </location>
</feature>
<proteinExistence type="evidence at transcript level"/>
<accession>Q08890</accession>
<accession>Q32KI7</accession>
<accession>Q3TM30</accession>
<comment type="function">
    <text evidence="2">Lysosomal enzyme involved in the degradation pathway of dermatan sulfate and heparan sulfate.</text>
</comment>
<comment type="catalytic activity">
    <reaction evidence="2">
        <text>Hydrolysis of the 2-sulfate groups of the L-iduronate 2-sulfate units of dermatan sulfate, heparan sulfate and heparin.</text>
        <dbReference type="EC" id="3.1.6.13"/>
    </reaction>
</comment>
<comment type="cofactor">
    <cofactor evidence="2">
        <name>Ca(2+)</name>
        <dbReference type="ChEBI" id="CHEBI:29108"/>
    </cofactor>
    <text evidence="2">Binds 1 Ca(2+) ion per subunit.</text>
</comment>
<comment type="subunit">
    <text evidence="2">Monomer. The 58-kDa mature form is composed of two chains resulting from proteolitic processing, the 42-kDa chain and the 14-kDa chain that remain stably associated and form the 58-kDa intermediate form which is enzymatically active.</text>
</comment>
<comment type="subcellular location">
    <subcellularLocation>
        <location evidence="4">Lysosome</location>
    </subcellularLocation>
</comment>
<comment type="tissue specificity">
    <text evidence="4">Found to be expressed in alpha and beta pancreatic cells.</text>
</comment>
<comment type="induction">
    <text evidence="4">By glucose, in a dose dependent manner.</text>
</comment>
<comment type="PTM">
    <text evidence="2">Synthesized as a 75-kDa precursor form in the endoplasmic reticulum (ER), and then processed by proteolytic cleavage through various intermediates to yield a 55-kDa mature form, with the release of an 18 kDa polypeptide.</text>
</comment>
<comment type="PTM">
    <text evidence="1">The conversion to 3-oxoalanine (also known as C-formylglycine, FGly), of a serine or cysteine residue in prokaryotes and of a cysteine residue in eukaryotes, is critical for catalytic activity.</text>
</comment>
<comment type="similarity">
    <text evidence="5">Belongs to the sulfatase family.</text>
</comment>
<comment type="sequence caution" evidence="5">
    <conflict type="frameshift">
        <sequence resource="EMBL-CDS" id="AAA37880"/>
    </conflict>
</comment>
<dbReference type="EC" id="3.1.6.13"/>
<dbReference type="EMBL" id="AK166178">
    <property type="protein sequence ID" value="BAE38612.1"/>
    <property type="molecule type" value="mRNA"/>
</dbReference>
<dbReference type="EMBL" id="BX294168">
    <property type="status" value="NOT_ANNOTATED_CDS"/>
    <property type="molecule type" value="Genomic_DNA"/>
</dbReference>
<dbReference type="EMBL" id="L07921">
    <property type="protein sequence ID" value="AAA37880.1"/>
    <property type="status" value="ALT_FRAME"/>
    <property type="molecule type" value="mRNA"/>
</dbReference>
<dbReference type="EMBL" id="BN000750">
    <property type="protein sequence ID" value="CAI84996.1"/>
    <property type="molecule type" value="mRNA"/>
</dbReference>
<dbReference type="CCDS" id="CCDS40996.1"/>
<dbReference type="PIR" id="A47153">
    <property type="entry name" value="A47153"/>
</dbReference>
<dbReference type="RefSeq" id="NP_034628.2">
    <property type="nucleotide sequence ID" value="NM_010498.4"/>
</dbReference>
<dbReference type="SMR" id="Q08890"/>
<dbReference type="BioGRID" id="200513">
    <property type="interactions" value="1"/>
</dbReference>
<dbReference type="FunCoup" id="Q08890">
    <property type="interactions" value="882"/>
</dbReference>
<dbReference type="STRING" id="10090.ENSMUSP00000099046"/>
<dbReference type="GlyConnect" id="2377">
    <property type="glycosylation" value="7 N-Linked glycans (3 sites)"/>
</dbReference>
<dbReference type="GlyCosmos" id="Q08890">
    <property type="glycosylation" value="6 sites, 7 glycans"/>
</dbReference>
<dbReference type="GlyGen" id="Q08890">
    <property type="glycosylation" value="7 sites, 10 N-linked glycans (4 sites)"/>
</dbReference>
<dbReference type="iPTMnet" id="Q08890"/>
<dbReference type="PhosphoSitePlus" id="Q08890"/>
<dbReference type="PaxDb" id="10090-ENSMUSP00000099046"/>
<dbReference type="PeptideAtlas" id="Q08890"/>
<dbReference type="ProteomicsDB" id="273266"/>
<dbReference type="DNASU" id="15931"/>
<dbReference type="Ensembl" id="ENSMUST00000101509.9">
    <property type="protein sequence ID" value="ENSMUSP00000099046.3"/>
    <property type="gene ID" value="ENSMUSG00000035847.16"/>
</dbReference>
<dbReference type="GeneID" id="15931"/>
<dbReference type="KEGG" id="mmu:15931"/>
<dbReference type="UCSC" id="uc012hjl.1">
    <property type="organism name" value="mouse"/>
</dbReference>
<dbReference type="AGR" id="MGI:96417"/>
<dbReference type="CTD" id="3423"/>
<dbReference type="MGI" id="MGI:96417">
    <property type="gene designation" value="Ids"/>
</dbReference>
<dbReference type="VEuPathDB" id="HostDB:ENSMUSG00000035847"/>
<dbReference type="eggNOG" id="KOG3867">
    <property type="taxonomic scope" value="Eukaryota"/>
</dbReference>
<dbReference type="GeneTree" id="ENSGT00940000156803"/>
<dbReference type="HOGENOM" id="CLU_006332_9_0_1"/>
<dbReference type="InParanoid" id="Q08890"/>
<dbReference type="OMA" id="HVFTRAY"/>
<dbReference type="OrthoDB" id="96314at2759"/>
<dbReference type="PhylomeDB" id="Q08890"/>
<dbReference type="TreeFam" id="TF323156"/>
<dbReference type="Reactome" id="R-MMU-2024096">
    <property type="pathway name" value="HS-GAG degradation"/>
</dbReference>
<dbReference type="Reactome" id="R-MMU-2024101">
    <property type="pathway name" value="CS/DS degradation"/>
</dbReference>
<dbReference type="BioGRID-ORCS" id="15931">
    <property type="hits" value="1 hit in 76 CRISPR screens"/>
</dbReference>
<dbReference type="ChiTaRS" id="Ids">
    <property type="organism name" value="mouse"/>
</dbReference>
<dbReference type="PRO" id="PR:Q08890"/>
<dbReference type="Proteomes" id="UP000000589">
    <property type="component" value="Chromosome X"/>
</dbReference>
<dbReference type="RNAct" id="Q08890">
    <property type="molecule type" value="protein"/>
</dbReference>
<dbReference type="Bgee" id="ENSMUSG00000035847">
    <property type="expression patterns" value="Expressed in subparaventricular zone and 225 other cell types or tissues"/>
</dbReference>
<dbReference type="ExpressionAtlas" id="Q08890">
    <property type="expression patterns" value="baseline and differential"/>
</dbReference>
<dbReference type="GO" id="GO:0043202">
    <property type="term" value="C:lysosomal lumen"/>
    <property type="evidence" value="ECO:0000314"/>
    <property type="project" value="MGI"/>
</dbReference>
<dbReference type="GO" id="GO:0005764">
    <property type="term" value="C:lysosome"/>
    <property type="evidence" value="ECO:0000314"/>
    <property type="project" value="UniProtKB"/>
</dbReference>
<dbReference type="GO" id="GO:0005509">
    <property type="term" value="F:calcium ion binding"/>
    <property type="evidence" value="ECO:0000250"/>
    <property type="project" value="UniProtKB"/>
</dbReference>
<dbReference type="GO" id="GO:0004423">
    <property type="term" value="F:iduronate-2-sulfatase activity"/>
    <property type="evidence" value="ECO:0000315"/>
    <property type="project" value="MGI"/>
</dbReference>
<dbReference type="GO" id="GO:0008484">
    <property type="term" value="F:sulfuric ester hydrolase activity"/>
    <property type="evidence" value="ECO:0000314"/>
    <property type="project" value="MGI"/>
</dbReference>
<dbReference type="GO" id="GO:0030209">
    <property type="term" value="P:dermatan sulfate proteoglycan catabolic process"/>
    <property type="evidence" value="ECO:0000315"/>
    <property type="project" value="MGI"/>
</dbReference>
<dbReference type="GO" id="GO:0006027">
    <property type="term" value="P:glycosaminoglycan catabolic process"/>
    <property type="evidence" value="ECO:0000250"/>
    <property type="project" value="UniProtKB"/>
</dbReference>
<dbReference type="GO" id="GO:0030200">
    <property type="term" value="P:heparan sulfate proteoglycan catabolic process"/>
    <property type="evidence" value="ECO:0000315"/>
    <property type="project" value="MGI"/>
</dbReference>
<dbReference type="CDD" id="cd16030">
    <property type="entry name" value="iduronate-2-sulfatase"/>
    <property type="match status" value="1"/>
</dbReference>
<dbReference type="FunFam" id="3.40.720.10:FF:000027">
    <property type="entry name" value="iduronate 2-sulfatase"/>
    <property type="match status" value="1"/>
</dbReference>
<dbReference type="Gene3D" id="3.40.720.10">
    <property type="entry name" value="Alkaline Phosphatase, subunit A"/>
    <property type="match status" value="1"/>
</dbReference>
<dbReference type="InterPro" id="IPR017850">
    <property type="entry name" value="Alkaline_phosphatase_core_sf"/>
</dbReference>
<dbReference type="InterPro" id="IPR035874">
    <property type="entry name" value="IDS"/>
</dbReference>
<dbReference type="InterPro" id="IPR024607">
    <property type="entry name" value="Sulfatase_CS"/>
</dbReference>
<dbReference type="InterPro" id="IPR000917">
    <property type="entry name" value="Sulfatase_N"/>
</dbReference>
<dbReference type="PANTHER" id="PTHR45953">
    <property type="entry name" value="IDURONATE 2-SULFATASE"/>
    <property type="match status" value="1"/>
</dbReference>
<dbReference type="PANTHER" id="PTHR45953:SF1">
    <property type="entry name" value="IDURONATE 2-SULFATASE"/>
    <property type="match status" value="1"/>
</dbReference>
<dbReference type="Pfam" id="PF00884">
    <property type="entry name" value="Sulfatase"/>
    <property type="match status" value="1"/>
</dbReference>
<dbReference type="SUPFAM" id="SSF53649">
    <property type="entry name" value="Alkaline phosphatase-like"/>
    <property type="match status" value="1"/>
</dbReference>
<dbReference type="PROSITE" id="PS00523">
    <property type="entry name" value="SULFATASE_1"/>
    <property type="match status" value="1"/>
</dbReference>
<dbReference type="PROSITE" id="PS00149">
    <property type="entry name" value="SULFATASE_2"/>
    <property type="match status" value="1"/>
</dbReference>
<sequence>MSPPPPPPIWRQLSFSLLLGSFCIALESAAQGNSATDALNILLIIVDDLRPSLGCYGDKLVRSPNIDQLASHSVLFQNAFAQQAVCAPSRVSFLTGRRPDTTRLYDFNSYWRVHSGNFSTIPQYFKENGYVTMSVGKVFHPGISSNHSDDYPYSWSFPPYHPSSEKYENTKTCKGQDGKLHANLLCPVDVADVPEGTLPDKQSTEEAIRLLEKMKTSASPFFLAVGYHKPHIPFRYPKEFQKLYPLENITLAPDPHVPDSLPPVAYNPWMDIREREDVQALNISVPYGPIPEDFQRKIRQSYFASVSYLDTQVGHVLSALDDLRLAHNTIIAFTSDHGWALGEHGEWAKYSNFDVATRVPLMLYVPGRTAPLPAAGQKLFPYRDPFDPASDWMDAGRHTEDLVELVSLFPTLAGLAGLPVPPRCPIPSFHVELCREGQNLQKHLQLHDLEEEPDLFGNPRELIAYSQYPRPADFPQWNSDKPSLNDIKVMGYSIRTVDYRYTVWVGFDPSEFLANFSDIHAGELYFVDSDPLQDHNVYNDSQHGGLLHSLRP</sequence>
<protein>
    <recommendedName>
        <fullName>Iduronate 2-sulfatase</fullName>
        <ecNumber>3.1.6.13</ecNumber>
    </recommendedName>
    <alternativeName>
        <fullName>Alpha-L-iduronate sulfate sulfatase</fullName>
    </alternativeName>
</protein>
<reference key="1">
    <citation type="journal article" date="2005" name="Science">
        <title>The transcriptional landscape of the mammalian genome.</title>
        <authorList>
            <person name="Carninci P."/>
            <person name="Kasukawa T."/>
            <person name="Katayama S."/>
            <person name="Gough J."/>
            <person name="Frith M.C."/>
            <person name="Maeda N."/>
            <person name="Oyama R."/>
            <person name="Ravasi T."/>
            <person name="Lenhard B."/>
            <person name="Wells C."/>
            <person name="Kodzius R."/>
            <person name="Shimokawa K."/>
            <person name="Bajic V.B."/>
            <person name="Brenner S.E."/>
            <person name="Batalov S."/>
            <person name="Forrest A.R."/>
            <person name="Zavolan M."/>
            <person name="Davis M.J."/>
            <person name="Wilming L.G."/>
            <person name="Aidinis V."/>
            <person name="Allen J.E."/>
            <person name="Ambesi-Impiombato A."/>
            <person name="Apweiler R."/>
            <person name="Aturaliya R.N."/>
            <person name="Bailey T.L."/>
            <person name="Bansal M."/>
            <person name="Baxter L."/>
            <person name="Beisel K.W."/>
            <person name="Bersano T."/>
            <person name="Bono H."/>
            <person name="Chalk A.M."/>
            <person name="Chiu K.P."/>
            <person name="Choudhary V."/>
            <person name="Christoffels A."/>
            <person name="Clutterbuck D.R."/>
            <person name="Crowe M.L."/>
            <person name="Dalla E."/>
            <person name="Dalrymple B.P."/>
            <person name="de Bono B."/>
            <person name="Della Gatta G."/>
            <person name="di Bernardo D."/>
            <person name="Down T."/>
            <person name="Engstrom P."/>
            <person name="Fagiolini M."/>
            <person name="Faulkner G."/>
            <person name="Fletcher C.F."/>
            <person name="Fukushima T."/>
            <person name="Furuno M."/>
            <person name="Futaki S."/>
            <person name="Gariboldi M."/>
            <person name="Georgii-Hemming P."/>
            <person name="Gingeras T.R."/>
            <person name="Gojobori T."/>
            <person name="Green R.E."/>
            <person name="Gustincich S."/>
            <person name="Harbers M."/>
            <person name="Hayashi Y."/>
            <person name="Hensch T.K."/>
            <person name="Hirokawa N."/>
            <person name="Hill D."/>
            <person name="Huminiecki L."/>
            <person name="Iacono M."/>
            <person name="Ikeo K."/>
            <person name="Iwama A."/>
            <person name="Ishikawa T."/>
            <person name="Jakt M."/>
            <person name="Kanapin A."/>
            <person name="Katoh M."/>
            <person name="Kawasawa Y."/>
            <person name="Kelso J."/>
            <person name="Kitamura H."/>
            <person name="Kitano H."/>
            <person name="Kollias G."/>
            <person name="Krishnan S.P."/>
            <person name="Kruger A."/>
            <person name="Kummerfeld S.K."/>
            <person name="Kurochkin I.V."/>
            <person name="Lareau L.F."/>
            <person name="Lazarevic D."/>
            <person name="Lipovich L."/>
            <person name="Liu J."/>
            <person name="Liuni S."/>
            <person name="McWilliam S."/>
            <person name="Madan Babu M."/>
            <person name="Madera M."/>
            <person name="Marchionni L."/>
            <person name="Matsuda H."/>
            <person name="Matsuzawa S."/>
            <person name="Miki H."/>
            <person name="Mignone F."/>
            <person name="Miyake S."/>
            <person name="Morris K."/>
            <person name="Mottagui-Tabar S."/>
            <person name="Mulder N."/>
            <person name="Nakano N."/>
            <person name="Nakauchi H."/>
            <person name="Ng P."/>
            <person name="Nilsson R."/>
            <person name="Nishiguchi S."/>
            <person name="Nishikawa S."/>
            <person name="Nori F."/>
            <person name="Ohara O."/>
            <person name="Okazaki Y."/>
            <person name="Orlando V."/>
            <person name="Pang K.C."/>
            <person name="Pavan W.J."/>
            <person name="Pavesi G."/>
            <person name="Pesole G."/>
            <person name="Petrovsky N."/>
            <person name="Piazza S."/>
            <person name="Reed J."/>
            <person name="Reid J.F."/>
            <person name="Ring B.Z."/>
            <person name="Ringwald M."/>
            <person name="Rost B."/>
            <person name="Ruan Y."/>
            <person name="Salzberg S.L."/>
            <person name="Sandelin A."/>
            <person name="Schneider C."/>
            <person name="Schoenbach C."/>
            <person name="Sekiguchi K."/>
            <person name="Semple C.A."/>
            <person name="Seno S."/>
            <person name="Sessa L."/>
            <person name="Sheng Y."/>
            <person name="Shibata Y."/>
            <person name="Shimada H."/>
            <person name="Shimada K."/>
            <person name="Silva D."/>
            <person name="Sinclair B."/>
            <person name="Sperling S."/>
            <person name="Stupka E."/>
            <person name="Sugiura K."/>
            <person name="Sultana R."/>
            <person name="Takenaka Y."/>
            <person name="Taki K."/>
            <person name="Tammoja K."/>
            <person name="Tan S.L."/>
            <person name="Tang S."/>
            <person name="Taylor M.S."/>
            <person name="Tegner J."/>
            <person name="Teichmann S.A."/>
            <person name="Ueda H.R."/>
            <person name="van Nimwegen E."/>
            <person name="Verardo R."/>
            <person name="Wei C.L."/>
            <person name="Yagi K."/>
            <person name="Yamanishi H."/>
            <person name="Zabarovsky E."/>
            <person name="Zhu S."/>
            <person name="Zimmer A."/>
            <person name="Hide W."/>
            <person name="Bult C."/>
            <person name="Grimmond S.M."/>
            <person name="Teasdale R.D."/>
            <person name="Liu E.T."/>
            <person name="Brusic V."/>
            <person name="Quackenbush J."/>
            <person name="Wahlestedt C."/>
            <person name="Mattick J.S."/>
            <person name="Hume D.A."/>
            <person name="Kai C."/>
            <person name="Sasaki D."/>
            <person name="Tomaru Y."/>
            <person name="Fukuda S."/>
            <person name="Kanamori-Katayama M."/>
            <person name="Suzuki M."/>
            <person name="Aoki J."/>
            <person name="Arakawa T."/>
            <person name="Iida J."/>
            <person name="Imamura K."/>
            <person name="Itoh M."/>
            <person name="Kato T."/>
            <person name="Kawaji H."/>
            <person name="Kawagashira N."/>
            <person name="Kawashima T."/>
            <person name="Kojima M."/>
            <person name="Kondo S."/>
            <person name="Konno H."/>
            <person name="Nakano K."/>
            <person name="Ninomiya N."/>
            <person name="Nishio T."/>
            <person name="Okada M."/>
            <person name="Plessy C."/>
            <person name="Shibata K."/>
            <person name="Shiraki T."/>
            <person name="Suzuki S."/>
            <person name="Tagami M."/>
            <person name="Waki K."/>
            <person name="Watahiki A."/>
            <person name="Okamura-Oho Y."/>
            <person name="Suzuki H."/>
            <person name="Kawai J."/>
            <person name="Hayashizaki Y."/>
        </authorList>
    </citation>
    <scope>NUCLEOTIDE SEQUENCE [LARGE SCALE MRNA]</scope>
    <source>
        <tissue>Mammary gland</tissue>
    </source>
</reference>
<reference key="2">
    <citation type="journal article" date="2009" name="PLoS Biol.">
        <title>Lineage-specific biology revealed by a finished genome assembly of the mouse.</title>
        <authorList>
            <person name="Church D.M."/>
            <person name="Goodstadt L."/>
            <person name="Hillier L.W."/>
            <person name="Zody M.C."/>
            <person name="Goldstein S."/>
            <person name="She X."/>
            <person name="Bult C.J."/>
            <person name="Agarwala R."/>
            <person name="Cherry J.L."/>
            <person name="DiCuccio M."/>
            <person name="Hlavina W."/>
            <person name="Kapustin Y."/>
            <person name="Meric P."/>
            <person name="Maglott D."/>
            <person name="Birtle Z."/>
            <person name="Marques A.C."/>
            <person name="Graves T."/>
            <person name="Zhou S."/>
            <person name="Teague B."/>
            <person name="Potamousis K."/>
            <person name="Churas C."/>
            <person name="Place M."/>
            <person name="Herschleb J."/>
            <person name="Runnheim R."/>
            <person name="Forrest D."/>
            <person name="Amos-Landgraf J."/>
            <person name="Schwartz D.C."/>
            <person name="Cheng Z."/>
            <person name="Lindblad-Toh K."/>
            <person name="Eichler E.E."/>
            <person name="Ponting C.P."/>
        </authorList>
    </citation>
    <scope>NUCLEOTIDE SEQUENCE [LARGE SCALE GENOMIC DNA]</scope>
    <source>
        <strain>C57BL/6J</strain>
    </source>
</reference>
<reference key="3">
    <citation type="journal article" date="1993" name="Genomics">
        <title>Cloning and characterization of the cDNA for the murine iduronate sulfatase gene.</title>
        <authorList>
            <person name="Daniele A."/>
            <person name="Faust C.J."/>
            <person name="Herman G.E."/>
            <person name="di Natale P."/>
            <person name="Ballabio A."/>
        </authorList>
    </citation>
    <scope>NUCLEOTIDE SEQUENCE [MRNA] OF 9-552</scope>
    <source>
        <tissue>Thymus</tissue>
    </source>
</reference>
<reference key="4">
    <citation type="journal article" date="2004" name="Am. J. Physiol.">
        <title>Identification of iduronate-2-sulfatase in mouse pancreatic islets.</title>
        <authorList>
            <person name="Coronado-Pons I."/>
            <person name="Novials A."/>
            <person name="Casas S."/>
            <person name="Clark A."/>
            <person name="Gomis R."/>
        </authorList>
    </citation>
    <scope>TISSUE SPECIFICITY</scope>
    <scope>INDUCTION</scope>
    <scope>SUBCELLULAR LOCATION</scope>
</reference>
<reference key="5">
    <citation type="journal article" date="2005" name="Hum. Mol. Genet.">
        <title>Sulfatases and sulfatase modifying factors: an exclusive and promiscuous relationship.</title>
        <authorList>
            <person name="Sardiello M."/>
            <person name="Annunziata I."/>
            <person name="Roma G."/>
            <person name="Ballabio A."/>
        </authorList>
    </citation>
    <scope>IDENTIFICATION</scope>
</reference>
<name>IDS_MOUSE</name>